<dbReference type="EMBL" id="U53877">
    <property type="protein sequence ID" value="AAB82370.1"/>
    <property type="molecule type" value="Genomic_DNA"/>
</dbReference>
<dbReference type="EMBL" id="Z73296">
    <property type="protein sequence ID" value="CAA97693.1"/>
    <property type="molecule type" value="Genomic_DNA"/>
</dbReference>
<dbReference type="EMBL" id="AY558534">
    <property type="protein sequence ID" value="AAS56860.1"/>
    <property type="molecule type" value="Genomic_DNA"/>
</dbReference>
<dbReference type="PIR" id="S64961">
    <property type="entry name" value="S64961"/>
</dbReference>
<dbReference type="DIP" id="DIP-2133N"/>
<dbReference type="STRING" id="4932.YLR124W"/>
<dbReference type="PaxDb" id="4932-YLR124W"/>
<dbReference type="EnsemblFungi" id="YLR124W_mRNA">
    <property type="protein sequence ID" value="YLR124W"/>
    <property type="gene ID" value="YLR124W"/>
</dbReference>
<dbReference type="AGR" id="SGD:S000004114"/>
<dbReference type="SGD" id="S000004114">
    <property type="gene designation" value="YLR124W"/>
</dbReference>
<dbReference type="HOGENOM" id="CLU_2122977_0_0_1"/>
<protein>
    <recommendedName>
        <fullName>Putative uncharacterized protein YLR124W</fullName>
    </recommendedName>
</protein>
<sequence>MTPLFPESVSTYIYEYSTIWRSGALLIKMMQRVITSCVTGPCKNCYVFLVLGIASWRYIFSYQDGILQSENSKWCSKEKKKKCSAIYPHYNHRDSLGNGAVPRNLLSTYHPMLM</sequence>
<accession>Q12327</accession>
<name>YL124_YEAST</name>
<feature type="chain" id="PRO_0000299616" description="Putative uncharacterized protein YLR124W">
    <location>
        <begin position="1"/>
        <end position="114"/>
    </location>
</feature>
<evidence type="ECO:0000305" key="1">
    <source>
    </source>
</evidence>
<gene>
    <name type="ordered locus">YLR124W</name>
    <name type="ORF">L2973</name>
    <name type="ORF">L9233.4</name>
</gene>
<organism>
    <name type="scientific">Saccharomyces cerevisiae (strain ATCC 204508 / S288c)</name>
    <name type="common">Baker's yeast</name>
    <dbReference type="NCBI Taxonomy" id="559292"/>
    <lineage>
        <taxon>Eukaryota</taxon>
        <taxon>Fungi</taxon>
        <taxon>Dikarya</taxon>
        <taxon>Ascomycota</taxon>
        <taxon>Saccharomycotina</taxon>
        <taxon>Saccharomycetes</taxon>
        <taxon>Saccharomycetales</taxon>
        <taxon>Saccharomycetaceae</taxon>
        <taxon>Saccharomyces</taxon>
    </lineage>
</organism>
<reference key="1">
    <citation type="journal article" date="1997" name="Nature">
        <title>The nucleotide sequence of Saccharomyces cerevisiae chromosome XII.</title>
        <authorList>
            <person name="Johnston M."/>
            <person name="Hillier L.W."/>
            <person name="Riles L."/>
            <person name="Albermann K."/>
            <person name="Andre B."/>
            <person name="Ansorge W."/>
            <person name="Benes V."/>
            <person name="Brueckner M."/>
            <person name="Delius H."/>
            <person name="Dubois E."/>
            <person name="Duesterhoeft A."/>
            <person name="Entian K.-D."/>
            <person name="Floeth M."/>
            <person name="Goffeau A."/>
            <person name="Hebling U."/>
            <person name="Heumann K."/>
            <person name="Heuss-Neitzel D."/>
            <person name="Hilbert H."/>
            <person name="Hilger F."/>
            <person name="Kleine K."/>
            <person name="Koetter P."/>
            <person name="Louis E.J."/>
            <person name="Messenguy F."/>
            <person name="Mewes H.-W."/>
            <person name="Miosga T."/>
            <person name="Moestl D."/>
            <person name="Mueller-Auer S."/>
            <person name="Nentwich U."/>
            <person name="Obermaier B."/>
            <person name="Piravandi E."/>
            <person name="Pohl T.M."/>
            <person name="Portetelle D."/>
            <person name="Purnelle B."/>
            <person name="Rechmann S."/>
            <person name="Rieger M."/>
            <person name="Rinke M."/>
            <person name="Rose M."/>
            <person name="Scharfe M."/>
            <person name="Scherens B."/>
            <person name="Scholler P."/>
            <person name="Schwager C."/>
            <person name="Schwarz S."/>
            <person name="Underwood A.P."/>
            <person name="Urrestarazu L.A."/>
            <person name="Vandenbol M."/>
            <person name="Verhasselt P."/>
            <person name="Vierendeels F."/>
            <person name="Voet M."/>
            <person name="Volckaert G."/>
            <person name="Voss H."/>
            <person name="Wambutt R."/>
            <person name="Wedler E."/>
            <person name="Wedler H."/>
            <person name="Zimmermann F.K."/>
            <person name="Zollner A."/>
            <person name="Hani J."/>
            <person name="Hoheisel J.D."/>
        </authorList>
    </citation>
    <scope>NUCLEOTIDE SEQUENCE [LARGE SCALE GENOMIC DNA]</scope>
    <source>
        <strain>ATCC 204508 / S288c</strain>
    </source>
</reference>
<reference key="2">
    <citation type="journal article" date="2014" name="G3 (Bethesda)">
        <title>The reference genome sequence of Saccharomyces cerevisiae: Then and now.</title>
        <authorList>
            <person name="Engel S.R."/>
            <person name="Dietrich F.S."/>
            <person name="Fisk D.G."/>
            <person name="Binkley G."/>
            <person name="Balakrishnan R."/>
            <person name="Costanzo M.C."/>
            <person name="Dwight S.S."/>
            <person name="Hitz B.C."/>
            <person name="Karra K."/>
            <person name="Nash R.S."/>
            <person name="Weng S."/>
            <person name="Wong E.D."/>
            <person name="Lloyd P."/>
            <person name="Skrzypek M.S."/>
            <person name="Miyasato S.R."/>
            <person name="Simison M."/>
            <person name="Cherry J.M."/>
        </authorList>
    </citation>
    <scope>GENOME REANNOTATION</scope>
    <source>
        <strain>ATCC 204508 / S288c</strain>
    </source>
</reference>
<reference key="3">
    <citation type="journal article" date="2007" name="Genome Res.">
        <title>Approaching a complete repository of sequence-verified protein-encoding clones for Saccharomyces cerevisiae.</title>
        <authorList>
            <person name="Hu Y."/>
            <person name="Rolfs A."/>
            <person name="Bhullar B."/>
            <person name="Murthy T.V.S."/>
            <person name="Zhu C."/>
            <person name="Berger M.F."/>
            <person name="Camargo A.A."/>
            <person name="Kelley F."/>
            <person name="McCarron S."/>
            <person name="Jepson D."/>
            <person name="Richardson A."/>
            <person name="Raphael J."/>
            <person name="Moreira D."/>
            <person name="Taycher E."/>
            <person name="Zuo D."/>
            <person name="Mohr S."/>
            <person name="Kane M.F."/>
            <person name="Williamson J."/>
            <person name="Simpson A.J.G."/>
            <person name="Bulyk M.L."/>
            <person name="Harlow E."/>
            <person name="Marsischky G."/>
            <person name="Kolodner R.D."/>
            <person name="LaBaer J."/>
        </authorList>
    </citation>
    <scope>NUCLEOTIDE SEQUENCE [GENOMIC DNA]</scope>
    <source>
        <strain>ATCC 204508 / S288c</strain>
    </source>
</reference>
<comment type="caution">
    <text evidence="1">Product of a dubious gene prediction unlikely to encode a functional protein. Because of that it is not part of the S.cerevisiae S288c complete/reference proteome set.</text>
</comment>
<proteinExistence type="uncertain"/>